<comment type="function">
    <text evidence="1">Located on the platform of the 30S subunit, it bridges several disparate RNA helices of the 16S rRNA. Forms part of the Shine-Dalgarno cleft in the 70S ribosome.</text>
</comment>
<comment type="subunit">
    <text evidence="1">Part of the 30S ribosomal subunit. Interacts with proteins S7 and S18. Binds to IF-3.</text>
</comment>
<comment type="similarity">
    <text evidence="1">Belongs to the universal ribosomal protein uS11 family.</text>
</comment>
<keyword id="KW-0687">Ribonucleoprotein</keyword>
<keyword id="KW-0689">Ribosomal protein</keyword>
<keyword id="KW-0694">RNA-binding</keyword>
<keyword id="KW-0699">rRNA-binding</keyword>
<reference key="1">
    <citation type="journal article" date="2002" name="Proc. Natl. Acad. Sci. U.S.A.">
        <title>The genome sequence of the facultative intracellular pathogen Brucella melitensis.</title>
        <authorList>
            <person name="DelVecchio V.G."/>
            <person name="Kapatral V."/>
            <person name="Redkar R.J."/>
            <person name="Patra G."/>
            <person name="Mujer C."/>
            <person name="Los T."/>
            <person name="Ivanova N."/>
            <person name="Anderson I."/>
            <person name="Bhattacharyya A."/>
            <person name="Lykidis A."/>
            <person name="Reznik G."/>
            <person name="Jablonski L."/>
            <person name="Larsen N."/>
            <person name="D'Souza M."/>
            <person name="Bernal A."/>
            <person name="Mazur M."/>
            <person name="Goltsman E."/>
            <person name="Selkov E."/>
            <person name="Elzer P.H."/>
            <person name="Hagius S."/>
            <person name="O'Callaghan D."/>
            <person name="Letesson J.-J."/>
            <person name="Haselkorn R."/>
            <person name="Kyrpides N.C."/>
            <person name="Overbeek R."/>
        </authorList>
    </citation>
    <scope>NUCLEOTIDE SEQUENCE [LARGE SCALE GENOMIC DNA]</scope>
    <source>
        <strain>ATCC 23456 / CCUG 17765 / NCTC 10094 / 16M</strain>
    </source>
</reference>
<evidence type="ECO:0000255" key="1">
    <source>
        <dbReference type="HAMAP-Rule" id="MF_01310"/>
    </source>
</evidence>
<evidence type="ECO:0000305" key="2"/>
<name>RS11_BRUME</name>
<sequence>MAKEATRVRRRERKNISSGVAHVNSTFNNTMITITDAQGNAIAWSSAGAQGFKGSRKSTPFAAQIAAEDCAKKAQEHGMRSLEVEVCGPGSGRESALRALQAAGFVITSIRDVTPIPHNGCRPRKKRRV</sequence>
<accession>P66350</accession>
<accession>Q8YHL7</accession>
<dbReference type="EMBL" id="AE008917">
    <property type="protein sequence ID" value="AAL51961.1"/>
    <property type="molecule type" value="Genomic_DNA"/>
</dbReference>
<dbReference type="PIR" id="AF3349">
    <property type="entry name" value="AF3349"/>
</dbReference>
<dbReference type="RefSeq" id="WP_002964339.1">
    <property type="nucleotide sequence ID" value="NZ_GG703780.1"/>
</dbReference>
<dbReference type="SMR" id="P66350"/>
<dbReference type="GeneID" id="97533547"/>
<dbReference type="KEGG" id="bme:BMEI0780"/>
<dbReference type="KEGG" id="bmel:DK63_642"/>
<dbReference type="PATRIC" id="fig|224914.52.peg.673"/>
<dbReference type="eggNOG" id="COG0100">
    <property type="taxonomic scope" value="Bacteria"/>
</dbReference>
<dbReference type="PhylomeDB" id="P66350"/>
<dbReference type="Proteomes" id="UP000000419">
    <property type="component" value="Chromosome I"/>
</dbReference>
<dbReference type="GO" id="GO:1990904">
    <property type="term" value="C:ribonucleoprotein complex"/>
    <property type="evidence" value="ECO:0007669"/>
    <property type="project" value="UniProtKB-KW"/>
</dbReference>
<dbReference type="GO" id="GO:0005840">
    <property type="term" value="C:ribosome"/>
    <property type="evidence" value="ECO:0007669"/>
    <property type="project" value="UniProtKB-KW"/>
</dbReference>
<dbReference type="GO" id="GO:0019843">
    <property type="term" value="F:rRNA binding"/>
    <property type="evidence" value="ECO:0007669"/>
    <property type="project" value="UniProtKB-UniRule"/>
</dbReference>
<dbReference type="GO" id="GO:0003735">
    <property type="term" value="F:structural constituent of ribosome"/>
    <property type="evidence" value="ECO:0007669"/>
    <property type="project" value="InterPro"/>
</dbReference>
<dbReference type="GO" id="GO:0006412">
    <property type="term" value="P:translation"/>
    <property type="evidence" value="ECO:0007669"/>
    <property type="project" value="UniProtKB-UniRule"/>
</dbReference>
<dbReference type="FunFam" id="3.30.420.80:FF:000001">
    <property type="entry name" value="30S ribosomal protein S11"/>
    <property type="match status" value="1"/>
</dbReference>
<dbReference type="Gene3D" id="3.30.420.80">
    <property type="entry name" value="Ribosomal protein S11"/>
    <property type="match status" value="1"/>
</dbReference>
<dbReference type="HAMAP" id="MF_01310">
    <property type="entry name" value="Ribosomal_uS11"/>
    <property type="match status" value="1"/>
</dbReference>
<dbReference type="InterPro" id="IPR001971">
    <property type="entry name" value="Ribosomal_uS11"/>
</dbReference>
<dbReference type="InterPro" id="IPR019981">
    <property type="entry name" value="Ribosomal_uS11_bac-type"/>
</dbReference>
<dbReference type="InterPro" id="IPR018102">
    <property type="entry name" value="Ribosomal_uS11_CS"/>
</dbReference>
<dbReference type="InterPro" id="IPR036967">
    <property type="entry name" value="Ribosomal_uS11_sf"/>
</dbReference>
<dbReference type="NCBIfam" id="NF003698">
    <property type="entry name" value="PRK05309.1"/>
    <property type="match status" value="1"/>
</dbReference>
<dbReference type="NCBIfam" id="TIGR03632">
    <property type="entry name" value="uS11_bact"/>
    <property type="match status" value="1"/>
</dbReference>
<dbReference type="PANTHER" id="PTHR11759">
    <property type="entry name" value="40S RIBOSOMAL PROTEIN S14/30S RIBOSOMAL PROTEIN S11"/>
    <property type="match status" value="1"/>
</dbReference>
<dbReference type="Pfam" id="PF00411">
    <property type="entry name" value="Ribosomal_S11"/>
    <property type="match status" value="1"/>
</dbReference>
<dbReference type="PIRSF" id="PIRSF002131">
    <property type="entry name" value="Ribosomal_S11"/>
    <property type="match status" value="1"/>
</dbReference>
<dbReference type="SUPFAM" id="SSF53137">
    <property type="entry name" value="Translational machinery components"/>
    <property type="match status" value="1"/>
</dbReference>
<dbReference type="PROSITE" id="PS00054">
    <property type="entry name" value="RIBOSOMAL_S11"/>
    <property type="match status" value="1"/>
</dbReference>
<organism>
    <name type="scientific">Brucella melitensis biotype 1 (strain ATCC 23456 / CCUG 17765 / NCTC 10094 / 16M)</name>
    <dbReference type="NCBI Taxonomy" id="224914"/>
    <lineage>
        <taxon>Bacteria</taxon>
        <taxon>Pseudomonadati</taxon>
        <taxon>Pseudomonadota</taxon>
        <taxon>Alphaproteobacteria</taxon>
        <taxon>Hyphomicrobiales</taxon>
        <taxon>Brucellaceae</taxon>
        <taxon>Brucella/Ochrobactrum group</taxon>
        <taxon>Brucella</taxon>
    </lineage>
</organism>
<protein>
    <recommendedName>
        <fullName evidence="1">Small ribosomal subunit protein uS11</fullName>
    </recommendedName>
    <alternativeName>
        <fullName evidence="2">30S ribosomal protein S11</fullName>
    </alternativeName>
</protein>
<proteinExistence type="inferred from homology"/>
<gene>
    <name evidence="1" type="primary">rpsK</name>
    <name type="ordered locus">BMEI0780</name>
</gene>
<feature type="chain" id="PRO_0000123118" description="Small ribosomal subunit protein uS11">
    <location>
        <begin position="1"/>
        <end position="129"/>
    </location>
</feature>